<keyword id="KW-0963">Cytoplasm</keyword>
<keyword id="KW-0378">Hydrolase</keyword>
<keyword id="KW-1185">Reference proteome</keyword>
<keyword id="KW-0694">RNA-binding</keyword>
<keyword id="KW-0820">tRNA-binding</keyword>
<protein>
    <recommendedName>
        <fullName evidence="1">D-aminoacyl-tRNA deacylase</fullName>
        <shortName evidence="1">DTD</shortName>
        <ecNumber evidence="1">3.1.1.96</ecNumber>
    </recommendedName>
    <alternativeName>
        <fullName evidence="1">Gly-tRNA(Ala) deacylase</fullName>
    </alternativeName>
</protein>
<dbReference type="EC" id="3.1.1.96" evidence="1"/>
<dbReference type="EMBL" id="CP000800">
    <property type="protein sequence ID" value="ABV18545.1"/>
    <property type="molecule type" value="Genomic_DNA"/>
</dbReference>
<dbReference type="RefSeq" id="WP_000560983.1">
    <property type="nucleotide sequence ID" value="NC_009801.1"/>
</dbReference>
<dbReference type="SMR" id="A7ZU92"/>
<dbReference type="GeneID" id="93778051"/>
<dbReference type="KEGG" id="ecw:EcE24377A_4410"/>
<dbReference type="HOGENOM" id="CLU_076901_1_0_6"/>
<dbReference type="Proteomes" id="UP000001122">
    <property type="component" value="Chromosome"/>
</dbReference>
<dbReference type="GO" id="GO:0005737">
    <property type="term" value="C:cytoplasm"/>
    <property type="evidence" value="ECO:0007669"/>
    <property type="project" value="UniProtKB-SubCell"/>
</dbReference>
<dbReference type="GO" id="GO:0051500">
    <property type="term" value="F:D-tyrosyl-tRNA(Tyr) deacylase activity"/>
    <property type="evidence" value="ECO:0007669"/>
    <property type="project" value="TreeGrafter"/>
</dbReference>
<dbReference type="GO" id="GO:0106026">
    <property type="term" value="F:Gly-tRNA(Ala) deacylase activity"/>
    <property type="evidence" value="ECO:0007669"/>
    <property type="project" value="UniProtKB-UniRule"/>
</dbReference>
<dbReference type="GO" id="GO:0043908">
    <property type="term" value="F:Ser(Gly)-tRNA(Ala) hydrolase activity"/>
    <property type="evidence" value="ECO:0007669"/>
    <property type="project" value="UniProtKB-UniRule"/>
</dbReference>
<dbReference type="GO" id="GO:0000049">
    <property type="term" value="F:tRNA binding"/>
    <property type="evidence" value="ECO:0007669"/>
    <property type="project" value="UniProtKB-UniRule"/>
</dbReference>
<dbReference type="GO" id="GO:0019478">
    <property type="term" value="P:D-amino acid catabolic process"/>
    <property type="evidence" value="ECO:0007669"/>
    <property type="project" value="UniProtKB-UniRule"/>
</dbReference>
<dbReference type="CDD" id="cd00563">
    <property type="entry name" value="Dtyr_deacylase"/>
    <property type="match status" value="1"/>
</dbReference>
<dbReference type="FunFam" id="3.50.80.10:FF:000001">
    <property type="entry name" value="D-aminoacyl-tRNA deacylase"/>
    <property type="match status" value="1"/>
</dbReference>
<dbReference type="Gene3D" id="3.50.80.10">
    <property type="entry name" value="D-tyrosyl-tRNA(Tyr) deacylase"/>
    <property type="match status" value="1"/>
</dbReference>
<dbReference type="HAMAP" id="MF_00518">
    <property type="entry name" value="Deacylase_Dtd"/>
    <property type="match status" value="1"/>
</dbReference>
<dbReference type="InterPro" id="IPR003732">
    <property type="entry name" value="Daa-tRNA_deacyls_DTD"/>
</dbReference>
<dbReference type="InterPro" id="IPR023509">
    <property type="entry name" value="DTD-like_sf"/>
</dbReference>
<dbReference type="NCBIfam" id="TIGR00256">
    <property type="entry name" value="D-aminoacyl-tRNA deacylase"/>
    <property type="match status" value="1"/>
</dbReference>
<dbReference type="PANTHER" id="PTHR10472:SF5">
    <property type="entry name" value="D-AMINOACYL-TRNA DEACYLASE 1"/>
    <property type="match status" value="1"/>
</dbReference>
<dbReference type="PANTHER" id="PTHR10472">
    <property type="entry name" value="D-TYROSYL-TRNA TYR DEACYLASE"/>
    <property type="match status" value="1"/>
</dbReference>
<dbReference type="Pfam" id="PF02580">
    <property type="entry name" value="Tyr_Deacylase"/>
    <property type="match status" value="1"/>
</dbReference>
<dbReference type="SUPFAM" id="SSF69500">
    <property type="entry name" value="DTD-like"/>
    <property type="match status" value="1"/>
</dbReference>
<comment type="function">
    <text evidence="1">An aminoacyl-tRNA editing enzyme that deacylates mischarged D-aminoacyl-tRNAs. Also deacylates mischarged glycyl-tRNA(Ala), protecting cells against glycine mischarging by AlaRS. Acts via tRNA-based rather than protein-based catalysis; rejects L-amino acids rather than detecting D-amino acids in the active site. By recycling D-aminoacyl-tRNA to D-amino acids and free tRNA molecules, this enzyme counteracts the toxicity associated with the formation of D-aminoacyl-tRNA entities in vivo and helps enforce protein L-homochirality.</text>
</comment>
<comment type="catalytic activity">
    <reaction evidence="1">
        <text>glycyl-tRNA(Ala) + H2O = tRNA(Ala) + glycine + H(+)</text>
        <dbReference type="Rhea" id="RHEA:53744"/>
        <dbReference type="Rhea" id="RHEA-COMP:9657"/>
        <dbReference type="Rhea" id="RHEA-COMP:13640"/>
        <dbReference type="ChEBI" id="CHEBI:15377"/>
        <dbReference type="ChEBI" id="CHEBI:15378"/>
        <dbReference type="ChEBI" id="CHEBI:57305"/>
        <dbReference type="ChEBI" id="CHEBI:78442"/>
        <dbReference type="ChEBI" id="CHEBI:78522"/>
        <dbReference type="EC" id="3.1.1.96"/>
    </reaction>
</comment>
<comment type="catalytic activity">
    <reaction evidence="1">
        <text>a D-aminoacyl-tRNA + H2O = a tRNA + a D-alpha-amino acid + H(+)</text>
        <dbReference type="Rhea" id="RHEA:13953"/>
        <dbReference type="Rhea" id="RHEA-COMP:10123"/>
        <dbReference type="Rhea" id="RHEA-COMP:10124"/>
        <dbReference type="ChEBI" id="CHEBI:15377"/>
        <dbReference type="ChEBI" id="CHEBI:15378"/>
        <dbReference type="ChEBI" id="CHEBI:59871"/>
        <dbReference type="ChEBI" id="CHEBI:78442"/>
        <dbReference type="ChEBI" id="CHEBI:79333"/>
        <dbReference type="EC" id="3.1.1.96"/>
    </reaction>
</comment>
<comment type="subunit">
    <text evidence="1">Homodimer.</text>
</comment>
<comment type="subcellular location">
    <subcellularLocation>
        <location evidence="1">Cytoplasm</location>
    </subcellularLocation>
</comment>
<comment type="domain">
    <text evidence="1">A Gly-cisPro motif from one monomer fits into the active site of the other monomer to allow specific chiral rejection of L-amino acids.</text>
</comment>
<comment type="similarity">
    <text evidence="1">Belongs to the DTD family.</text>
</comment>
<gene>
    <name evidence="1" type="primary">dtd</name>
    <name type="ordered locus">EcE24377A_4410</name>
</gene>
<feature type="chain" id="PRO_1000060906" description="D-aminoacyl-tRNA deacylase">
    <location>
        <begin position="1"/>
        <end position="145"/>
    </location>
</feature>
<feature type="short sequence motif" description="Gly-cisPro motif, important for rejection of L-amino acids" evidence="1">
    <location>
        <begin position="137"/>
        <end position="138"/>
    </location>
</feature>
<organism>
    <name type="scientific">Escherichia coli O139:H28 (strain E24377A / ETEC)</name>
    <dbReference type="NCBI Taxonomy" id="331111"/>
    <lineage>
        <taxon>Bacteria</taxon>
        <taxon>Pseudomonadati</taxon>
        <taxon>Pseudomonadota</taxon>
        <taxon>Gammaproteobacteria</taxon>
        <taxon>Enterobacterales</taxon>
        <taxon>Enterobacteriaceae</taxon>
        <taxon>Escherichia</taxon>
    </lineage>
</organism>
<sequence>MIALIQRVTRASVTVEGEVTGEIGAGLLVLLGVEKDDDEQKANRLCERVLGYRIFSDAEGKMNLNVQQAGGSVLVVSQFTLAADTERGMRPSFSKGASPDRAEALYDYFVERCRQQEMNTQTGRFAADMQVSLVNDGPVTFWLQV</sequence>
<accession>A7ZU92</accession>
<evidence type="ECO:0000255" key="1">
    <source>
        <dbReference type="HAMAP-Rule" id="MF_00518"/>
    </source>
</evidence>
<proteinExistence type="inferred from homology"/>
<reference key="1">
    <citation type="journal article" date="2008" name="J. Bacteriol.">
        <title>The pangenome structure of Escherichia coli: comparative genomic analysis of E. coli commensal and pathogenic isolates.</title>
        <authorList>
            <person name="Rasko D.A."/>
            <person name="Rosovitz M.J."/>
            <person name="Myers G.S.A."/>
            <person name="Mongodin E.F."/>
            <person name="Fricke W.F."/>
            <person name="Gajer P."/>
            <person name="Crabtree J."/>
            <person name="Sebaihia M."/>
            <person name="Thomson N.R."/>
            <person name="Chaudhuri R."/>
            <person name="Henderson I.R."/>
            <person name="Sperandio V."/>
            <person name="Ravel J."/>
        </authorList>
    </citation>
    <scope>NUCLEOTIDE SEQUENCE [LARGE SCALE GENOMIC DNA]</scope>
    <source>
        <strain>E24377A / ETEC</strain>
    </source>
</reference>
<name>DTD_ECO24</name>